<evidence type="ECO:0000250" key="1">
    <source>
        <dbReference type="UniProtKB" id="P46777"/>
    </source>
</evidence>
<evidence type="ECO:0000250" key="2">
    <source>
        <dbReference type="UniProtKB" id="P47962"/>
    </source>
</evidence>
<evidence type="ECO:0000256" key="3">
    <source>
        <dbReference type="SAM" id="MobiDB-lite"/>
    </source>
</evidence>
<evidence type="ECO:0000269" key="4">
    <source>
    </source>
</evidence>
<evidence type="ECO:0000269" key="5">
    <source>
    </source>
</evidence>
<evidence type="ECO:0000269" key="6">
    <source>
    </source>
</evidence>
<evidence type="ECO:0000269" key="7">
    <source>
    </source>
</evidence>
<evidence type="ECO:0000269" key="8">
    <source>
    </source>
</evidence>
<evidence type="ECO:0000269" key="9">
    <source>
    </source>
</evidence>
<evidence type="ECO:0000269" key="10">
    <source>
    </source>
</evidence>
<evidence type="ECO:0000269" key="11">
    <source>
    </source>
</evidence>
<evidence type="ECO:0000269" key="12">
    <source>
    </source>
</evidence>
<evidence type="ECO:0000269" key="13">
    <source>
    </source>
</evidence>
<evidence type="ECO:0000269" key="14">
    <source>
    </source>
</evidence>
<evidence type="ECO:0000269" key="15">
    <source>
    </source>
</evidence>
<evidence type="ECO:0000305" key="16"/>
<evidence type="ECO:0007744" key="17">
    <source>
        <dbReference type="PDB" id="3JAG"/>
    </source>
</evidence>
<evidence type="ECO:0007744" key="18">
    <source>
        <dbReference type="PDB" id="3JAH"/>
    </source>
</evidence>
<evidence type="ECO:0007744" key="19">
    <source>
        <dbReference type="PDB" id="5LZS"/>
    </source>
</evidence>
<evidence type="ECO:0007744" key="20">
    <source>
        <dbReference type="PDB" id="5LZT"/>
    </source>
</evidence>
<evidence type="ECO:0007744" key="21">
    <source>
        <dbReference type="PDB" id="6D90"/>
    </source>
</evidence>
<evidence type="ECO:0007744" key="22">
    <source>
        <dbReference type="PDB" id="6D9J"/>
    </source>
</evidence>
<evidence type="ECO:0007744" key="23">
    <source>
        <dbReference type="PDB" id="6HCF"/>
    </source>
</evidence>
<evidence type="ECO:0007744" key="24">
    <source>
        <dbReference type="PDB" id="6HCJ"/>
    </source>
</evidence>
<evidence type="ECO:0007744" key="25">
    <source>
        <dbReference type="PDB" id="6MTB"/>
    </source>
</evidence>
<evidence type="ECO:0007744" key="26">
    <source>
        <dbReference type="PDB" id="6MTC"/>
    </source>
</evidence>
<evidence type="ECO:0007744" key="27">
    <source>
        <dbReference type="PDB" id="6P5I"/>
    </source>
</evidence>
<evidence type="ECO:0007744" key="28">
    <source>
        <dbReference type="PDB" id="6P5J"/>
    </source>
</evidence>
<evidence type="ECO:0007744" key="29">
    <source>
        <dbReference type="PDB" id="6R5Q"/>
    </source>
</evidence>
<evidence type="ECO:0007744" key="30">
    <source>
        <dbReference type="PDB" id="6R6G"/>
    </source>
</evidence>
<evidence type="ECO:0007744" key="31">
    <source>
        <dbReference type="PDB" id="6SGC"/>
    </source>
</evidence>
<evidence type="ECO:0007744" key="32">
    <source>
        <dbReference type="PDB" id="6ZVK"/>
    </source>
</evidence>
<evidence type="ECO:0007744" key="33">
    <source>
        <dbReference type="PDB" id="7A01"/>
    </source>
</evidence>
<evidence type="ECO:0007744" key="34">
    <source>
        <dbReference type="PDB" id="7OYD"/>
    </source>
</evidence>
<evidence type="ECO:0007744" key="35">
    <source>
        <dbReference type="PDB" id="7UCJ"/>
    </source>
</evidence>
<evidence type="ECO:0007744" key="36">
    <source>
        <dbReference type="PDB" id="7UCK"/>
    </source>
</evidence>
<evidence type="ECO:0007744" key="37">
    <source>
        <dbReference type="PDB" id="7ZJW"/>
    </source>
</evidence>
<evidence type="ECO:0007744" key="38">
    <source>
        <dbReference type="PDB" id="7ZJX"/>
    </source>
</evidence>
<dbReference type="EMBL" id="AAGW02001465">
    <property type="status" value="NOT_ANNOTATED_CDS"/>
    <property type="molecule type" value="Genomic_DNA"/>
</dbReference>
<dbReference type="RefSeq" id="NP_001182608.1">
    <property type="nucleotide sequence ID" value="NM_001195679.1"/>
</dbReference>
<dbReference type="RefSeq" id="XP_002718329.1">
    <property type="nucleotide sequence ID" value="XM_002718283.3"/>
</dbReference>
<dbReference type="PDB" id="3JAG">
    <property type="method" value="EM"/>
    <property type="resolution" value="3.65 A"/>
    <property type="chains" value="D=3-294"/>
</dbReference>
<dbReference type="PDB" id="3JAH">
    <property type="method" value="EM"/>
    <property type="resolution" value="3.45 A"/>
    <property type="chains" value="D=3-294"/>
</dbReference>
<dbReference type="PDB" id="3JAI">
    <property type="method" value="EM"/>
    <property type="resolution" value="3.65 A"/>
    <property type="chains" value="D=3-294"/>
</dbReference>
<dbReference type="PDB" id="5LZS">
    <property type="method" value="EM"/>
    <property type="resolution" value="3.31 A"/>
    <property type="chains" value="D=1-297"/>
</dbReference>
<dbReference type="PDB" id="5LZT">
    <property type="method" value="EM"/>
    <property type="resolution" value="3.65 A"/>
    <property type="chains" value="D=1-297"/>
</dbReference>
<dbReference type="PDB" id="5LZU">
    <property type="method" value="EM"/>
    <property type="resolution" value="3.75 A"/>
    <property type="chains" value="D=1-297"/>
</dbReference>
<dbReference type="PDB" id="5LZV">
    <property type="method" value="EM"/>
    <property type="resolution" value="3.35 A"/>
    <property type="chains" value="D=1-297"/>
</dbReference>
<dbReference type="PDB" id="5LZW">
    <property type="method" value="EM"/>
    <property type="resolution" value="3.53 A"/>
    <property type="chains" value="D=1-297"/>
</dbReference>
<dbReference type="PDB" id="5LZX">
    <property type="method" value="EM"/>
    <property type="resolution" value="3.67 A"/>
    <property type="chains" value="D=1-297"/>
</dbReference>
<dbReference type="PDB" id="5LZY">
    <property type="method" value="EM"/>
    <property type="resolution" value="3.99 A"/>
    <property type="chains" value="D=1-297"/>
</dbReference>
<dbReference type="PDB" id="5LZZ">
    <property type="method" value="EM"/>
    <property type="resolution" value="3.47 A"/>
    <property type="chains" value="D=1-297"/>
</dbReference>
<dbReference type="PDB" id="6D90">
    <property type="method" value="EM"/>
    <property type="resolution" value="3.20 A"/>
    <property type="chains" value="D=2-297"/>
</dbReference>
<dbReference type="PDB" id="6D9J">
    <property type="method" value="EM"/>
    <property type="resolution" value="3.20 A"/>
    <property type="chains" value="D=2-297"/>
</dbReference>
<dbReference type="PDB" id="6FTG">
    <property type="method" value="EM"/>
    <property type="resolution" value="9.10 A"/>
    <property type="chains" value="D=3-294"/>
</dbReference>
<dbReference type="PDB" id="6FTI">
    <property type="method" value="EM"/>
    <property type="resolution" value="4.20 A"/>
    <property type="chains" value="D=3-294"/>
</dbReference>
<dbReference type="PDB" id="6FTJ">
    <property type="method" value="EM"/>
    <property type="resolution" value="4.70 A"/>
    <property type="chains" value="D=3-294"/>
</dbReference>
<dbReference type="PDB" id="6HCF">
    <property type="method" value="EM"/>
    <property type="resolution" value="3.90 A"/>
    <property type="chains" value="D3=1-297"/>
</dbReference>
<dbReference type="PDB" id="6HCJ">
    <property type="method" value="EM"/>
    <property type="resolution" value="3.80 A"/>
    <property type="chains" value="D3=1-297"/>
</dbReference>
<dbReference type="PDB" id="6HCM">
    <property type="method" value="EM"/>
    <property type="resolution" value="6.80 A"/>
    <property type="chains" value="D3=1-297"/>
</dbReference>
<dbReference type="PDB" id="6HCQ">
    <property type="method" value="EM"/>
    <property type="resolution" value="6.50 A"/>
    <property type="chains" value="D3=1-297"/>
</dbReference>
<dbReference type="PDB" id="6MTB">
    <property type="method" value="EM"/>
    <property type="resolution" value="3.60 A"/>
    <property type="chains" value="D=3-295"/>
</dbReference>
<dbReference type="PDB" id="6MTC">
    <property type="method" value="EM"/>
    <property type="resolution" value="3.40 A"/>
    <property type="chains" value="D=3-295"/>
</dbReference>
<dbReference type="PDB" id="6MTD">
    <property type="method" value="EM"/>
    <property type="resolution" value="3.30 A"/>
    <property type="chains" value="D=3-295"/>
</dbReference>
<dbReference type="PDB" id="6MTE">
    <property type="method" value="EM"/>
    <property type="resolution" value="3.40 A"/>
    <property type="chains" value="D=3-295"/>
</dbReference>
<dbReference type="PDB" id="6P5I">
    <property type="method" value="EM"/>
    <property type="resolution" value="3.10 A"/>
    <property type="chains" value="AD=2-297"/>
</dbReference>
<dbReference type="PDB" id="6P5J">
    <property type="method" value="EM"/>
    <property type="resolution" value="3.10 A"/>
    <property type="chains" value="AD=2-297"/>
</dbReference>
<dbReference type="PDB" id="6P5K">
    <property type="method" value="EM"/>
    <property type="resolution" value="3.10 A"/>
    <property type="chains" value="AD=2-297"/>
</dbReference>
<dbReference type="PDB" id="6P5N">
    <property type="method" value="EM"/>
    <property type="resolution" value="3.20 A"/>
    <property type="chains" value="AD=2-297"/>
</dbReference>
<dbReference type="PDB" id="6R5Q">
    <property type="method" value="EM"/>
    <property type="resolution" value="3.00 A"/>
    <property type="chains" value="D=3-295"/>
</dbReference>
<dbReference type="PDB" id="6R6G">
    <property type="method" value="EM"/>
    <property type="resolution" value="3.70 A"/>
    <property type="chains" value="D=3-295"/>
</dbReference>
<dbReference type="PDB" id="6R6P">
    <property type="method" value="EM"/>
    <property type="resolution" value="3.10 A"/>
    <property type="chains" value="D=3-294"/>
</dbReference>
<dbReference type="PDB" id="6R7Q">
    <property type="method" value="EM"/>
    <property type="resolution" value="3.90 A"/>
    <property type="chains" value="D=3-295"/>
</dbReference>
<dbReference type="PDB" id="6SGC">
    <property type="method" value="EM"/>
    <property type="resolution" value="2.80 A"/>
    <property type="chains" value="D2=1-297"/>
</dbReference>
<dbReference type="PDB" id="6T59">
    <property type="method" value="EM"/>
    <property type="resolution" value="3.11 A"/>
    <property type="chains" value="D3=1-297"/>
</dbReference>
<dbReference type="PDB" id="6ZVK">
    <property type="method" value="EM"/>
    <property type="resolution" value="3.49 A"/>
    <property type="chains" value="G2=3-294"/>
</dbReference>
<dbReference type="PDB" id="7A01">
    <property type="method" value="EM"/>
    <property type="resolution" value="3.60 A"/>
    <property type="chains" value="G2=3-294"/>
</dbReference>
<dbReference type="PDB" id="7MDZ">
    <property type="method" value="EM"/>
    <property type="resolution" value="3.20 A"/>
    <property type="chains" value="D=1-297"/>
</dbReference>
<dbReference type="PDB" id="7NFX">
    <property type="method" value="EM"/>
    <property type="resolution" value="3.20 A"/>
    <property type="chains" value="D=1-297"/>
</dbReference>
<dbReference type="PDB" id="7NWG">
    <property type="method" value="EM"/>
    <property type="resolution" value="3.80 A"/>
    <property type="chains" value="D3=1-297"/>
</dbReference>
<dbReference type="PDB" id="7NWH">
    <property type="method" value="EM"/>
    <property type="resolution" value="4.10 A"/>
    <property type="chains" value="D=2-297"/>
</dbReference>
<dbReference type="PDB" id="7NWI">
    <property type="method" value="EM"/>
    <property type="resolution" value="3.13 A"/>
    <property type="chains" value="D=1-297"/>
</dbReference>
<dbReference type="PDB" id="7O7Y">
    <property type="method" value="EM"/>
    <property type="resolution" value="2.20 A"/>
    <property type="chains" value="BD=1-297"/>
</dbReference>
<dbReference type="PDB" id="7O7Z">
    <property type="method" value="EM"/>
    <property type="resolution" value="2.40 A"/>
    <property type="chains" value="BD=1-297"/>
</dbReference>
<dbReference type="PDB" id="7O80">
    <property type="method" value="EM"/>
    <property type="resolution" value="2.90 A"/>
    <property type="chains" value="BD=1-297"/>
</dbReference>
<dbReference type="PDB" id="7O81">
    <property type="method" value="EM"/>
    <property type="resolution" value="3.10 A"/>
    <property type="chains" value="BD=1-297"/>
</dbReference>
<dbReference type="PDB" id="7OBR">
    <property type="method" value="EM"/>
    <property type="resolution" value="2.80 A"/>
    <property type="chains" value="D=1-297"/>
</dbReference>
<dbReference type="PDB" id="7OYD">
    <property type="method" value="EM"/>
    <property type="resolution" value="2.30 A"/>
    <property type="chains" value="D=1-297"/>
</dbReference>
<dbReference type="PDB" id="7QWQ">
    <property type="method" value="EM"/>
    <property type="resolution" value="2.83 A"/>
    <property type="chains" value="D=1-297"/>
</dbReference>
<dbReference type="PDB" id="7QWR">
    <property type="method" value="EM"/>
    <property type="resolution" value="2.90 A"/>
    <property type="chains" value="D=1-297"/>
</dbReference>
<dbReference type="PDB" id="7QWS">
    <property type="method" value="EM"/>
    <property type="resolution" value="3.40 A"/>
    <property type="chains" value="D=1-297"/>
</dbReference>
<dbReference type="PDB" id="7TM3">
    <property type="method" value="EM"/>
    <property type="resolution" value="3.25 A"/>
    <property type="chains" value="D=1-297"/>
</dbReference>
<dbReference type="PDB" id="7TOQ">
    <property type="method" value="EM"/>
    <property type="resolution" value="3.10 A"/>
    <property type="chains" value="AL05=3-295"/>
</dbReference>
<dbReference type="PDB" id="7TOR">
    <property type="method" value="EM"/>
    <property type="resolution" value="2.90 A"/>
    <property type="chains" value="AL05=3-295"/>
</dbReference>
<dbReference type="PDB" id="7TUT">
    <property type="method" value="EM"/>
    <property type="resolution" value="3.88 A"/>
    <property type="chains" value="D=1-297"/>
</dbReference>
<dbReference type="PDB" id="7UCJ">
    <property type="method" value="EM"/>
    <property type="resolution" value="3.10 A"/>
    <property type="chains" value="D=3-293"/>
</dbReference>
<dbReference type="PDB" id="7UCK">
    <property type="method" value="EM"/>
    <property type="resolution" value="2.80 A"/>
    <property type="chains" value="D=3-293"/>
</dbReference>
<dbReference type="PDB" id="7ZJW">
    <property type="method" value="EM"/>
    <property type="resolution" value="2.80 A"/>
    <property type="chains" value="LG=1-297"/>
</dbReference>
<dbReference type="PDB" id="7ZJX">
    <property type="method" value="EM"/>
    <property type="resolution" value="3.10 A"/>
    <property type="chains" value="LG=1-297"/>
</dbReference>
<dbReference type="PDB" id="8B5L">
    <property type="method" value="EM"/>
    <property type="resolution" value="2.86 A"/>
    <property type="chains" value="D=3-295"/>
</dbReference>
<dbReference type="PDB" id="8B6C">
    <property type="method" value="EM"/>
    <property type="resolution" value="2.79 A"/>
    <property type="chains" value="D=3-295"/>
</dbReference>
<dbReference type="PDB" id="8BHF">
    <property type="method" value="EM"/>
    <property type="resolution" value="3.10 A"/>
    <property type="chains" value="m3=3-295"/>
</dbReference>
<dbReference type="PDB" id="8BPO">
    <property type="method" value="EM"/>
    <property type="resolution" value="2.80 A"/>
    <property type="chains" value="D2=1-297"/>
</dbReference>
<dbReference type="PDB" id="8BTK">
    <property type="method" value="EM"/>
    <property type="resolution" value="3.50 A"/>
    <property type="chains" value="BD=1-297"/>
</dbReference>
<dbReference type="PDB" id="8P2K">
    <property type="method" value="EM"/>
    <property type="resolution" value="2.90 A"/>
    <property type="chains" value="BD=1-297"/>
</dbReference>
<dbReference type="PDB" id="8RJB">
    <property type="method" value="EM"/>
    <property type="resolution" value="2.69 A"/>
    <property type="chains" value="D=1-297"/>
</dbReference>
<dbReference type="PDB" id="8RJC">
    <property type="method" value="EM"/>
    <property type="resolution" value="2.90 A"/>
    <property type="chains" value="D=1-297"/>
</dbReference>
<dbReference type="PDB" id="8RJD">
    <property type="method" value="EM"/>
    <property type="resolution" value="2.79 A"/>
    <property type="chains" value="D=1-297"/>
</dbReference>
<dbReference type="PDB" id="8SCB">
    <property type="method" value="EM"/>
    <property type="resolution" value="2.50 A"/>
    <property type="chains" value="D=1-297"/>
</dbReference>
<dbReference type="PDB" id="8VFT">
    <property type="method" value="EM"/>
    <property type="resolution" value="3.30 A"/>
    <property type="chains" value="D=1-297"/>
</dbReference>
<dbReference type="PDB" id="9BDL">
    <property type="method" value="EM"/>
    <property type="resolution" value="2.80 A"/>
    <property type="chains" value="AL05=3-295"/>
</dbReference>
<dbReference type="PDB" id="9BDN">
    <property type="method" value="EM"/>
    <property type="resolution" value="3.10 A"/>
    <property type="chains" value="AL05=3-295"/>
</dbReference>
<dbReference type="PDB" id="9BDP">
    <property type="method" value="EM"/>
    <property type="resolution" value="3.70 A"/>
    <property type="chains" value="AL05=3-295"/>
</dbReference>
<dbReference type="PDBsum" id="3JAG"/>
<dbReference type="PDBsum" id="3JAH"/>
<dbReference type="PDBsum" id="3JAI"/>
<dbReference type="PDBsum" id="5LZS"/>
<dbReference type="PDBsum" id="5LZT"/>
<dbReference type="PDBsum" id="5LZU"/>
<dbReference type="PDBsum" id="5LZV"/>
<dbReference type="PDBsum" id="5LZW"/>
<dbReference type="PDBsum" id="5LZX"/>
<dbReference type="PDBsum" id="5LZY"/>
<dbReference type="PDBsum" id="5LZZ"/>
<dbReference type="PDBsum" id="6D90"/>
<dbReference type="PDBsum" id="6D9J"/>
<dbReference type="PDBsum" id="6FTG"/>
<dbReference type="PDBsum" id="6FTI"/>
<dbReference type="PDBsum" id="6FTJ"/>
<dbReference type="PDBsum" id="6HCF"/>
<dbReference type="PDBsum" id="6HCJ"/>
<dbReference type="PDBsum" id="6HCM"/>
<dbReference type="PDBsum" id="6HCQ"/>
<dbReference type="PDBsum" id="6MTB"/>
<dbReference type="PDBsum" id="6MTC"/>
<dbReference type="PDBsum" id="6MTD"/>
<dbReference type="PDBsum" id="6MTE"/>
<dbReference type="PDBsum" id="6P5I"/>
<dbReference type="PDBsum" id="6P5J"/>
<dbReference type="PDBsum" id="6P5K"/>
<dbReference type="PDBsum" id="6P5N"/>
<dbReference type="PDBsum" id="6R5Q"/>
<dbReference type="PDBsum" id="6R6G"/>
<dbReference type="PDBsum" id="6R6P"/>
<dbReference type="PDBsum" id="6R7Q"/>
<dbReference type="PDBsum" id="6SGC"/>
<dbReference type="PDBsum" id="6T59"/>
<dbReference type="PDBsum" id="6ZVK"/>
<dbReference type="PDBsum" id="7A01"/>
<dbReference type="PDBsum" id="7MDZ"/>
<dbReference type="PDBsum" id="7NFX"/>
<dbReference type="PDBsum" id="7NWG"/>
<dbReference type="PDBsum" id="7NWH"/>
<dbReference type="PDBsum" id="7NWI"/>
<dbReference type="PDBsum" id="7O7Y"/>
<dbReference type="PDBsum" id="7O7Z"/>
<dbReference type="PDBsum" id="7O80"/>
<dbReference type="PDBsum" id="7O81"/>
<dbReference type="PDBsum" id="7OBR"/>
<dbReference type="PDBsum" id="7OYD"/>
<dbReference type="PDBsum" id="7QWQ"/>
<dbReference type="PDBsum" id="7QWR"/>
<dbReference type="PDBsum" id="7QWS"/>
<dbReference type="PDBsum" id="7TM3"/>
<dbReference type="PDBsum" id="7TOQ"/>
<dbReference type="PDBsum" id="7TOR"/>
<dbReference type="PDBsum" id="7TUT"/>
<dbReference type="PDBsum" id="7UCJ"/>
<dbReference type="PDBsum" id="7UCK"/>
<dbReference type="PDBsum" id="7ZJW"/>
<dbReference type="PDBsum" id="7ZJX"/>
<dbReference type="PDBsum" id="8B5L"/>
<dbReference type="PDBsum" id="8B6C"/>
<dbReference type="PDBsum" id="8BHF"/>
<dbReference type="PDBsum" id="8BPO"/>
<dbReference type="PDBsum" id="8BTK"/>
<dbReference type="PDBsum" id="8P2K"/>
<dbReference type="PDBsum" id="8RJB"/>
<dbReference type="PDBsum" id="8RJC"/>
<dbReference type="PDBsum" id="8RJD"/>
<dbReference type="PDBsum" id="8SCB"/>
<dbReference type="PDBsum" id="8VFT"/>
<dbReference type="PDBsum" id="9BDL"/>
<dbReference type="PDBsum" id="9BDN"/>
<dbReference type="PDBsum" id="9BDP"/>
<dbReference type="EMDB" id="EMD-0099"/>
<dbReference type="EMDB" id="EMD-0100"/>
<dbReference type="EMDB" id="EMD-0192"/>
<dbReference type="EMDB" id="EMD-0194"/>
<dbReference type="EMDB" id="EMD-0195"/>
<dbReference type="EMDB" id="EMD-0197"/>
<dbReference type="EMDB" id="EMD-10181"/>
<dbReference type="EMDB" id="EMD-10380"/>
<dbReference type="EMDB" id="EMD-11459"/>
<dbReference type="EMDB" id="EMD-11590"/>
<dbReference type="EMDB" id="EMD-12303"/>
<dbReference type="EMDB" id="EMD-12631"/>
<dbReference type="EMDB" id="EMD-12632"/>
<dbReference type="EMDB" id="EMD-12633"/>
<dbReference type="EMDB" id="EMD-12756"/>
<dbReference type="EMDB" id="EMD-12757"/>
<dbReference type="EMDB" id="EMD-12758"/>
<dbReference type="EMDB" id="EMD-12759"/>
<dbReference type="EMDB" id="EMD-12801"/>
<dbReference type="EMDB" id="EMD-13114"/>
<dbReference type="EMDB" id="EMD-14191"/>
<dbReference type="EMDB" id="EMD-14192"/>
<dbReference type="EMDB" id="EMD-14193"/>
<dbReference type="EMDB" id="EMD-14751"/>
<dbReference type="EMDB" id="EMD-14752"/>
<dbReference type="EMDB" id="EMD-15860"/>
<dbReference type="EMDB" id="EMD-15863"/>
<dbReference type="EMDB" id="EMD-16052"/>
<dbReference type="EMDB" id="EMD-16155"/>
<dbReference type="EMDB" id="EMD-16232"/>
<dbReference type="EMDB" id="EMD-17367"/>
<dbReference type="EMDB" id="EMD-19195"/>
<dbReference type="EMDB" id="EMD-19197"/>
<dbReference type="EMDB" id="EMD-19198"/>
<dbReference type="EMDB" id="EMD-20255"/>
<dbReference type="EMDB" id="EMD-20256"/>
<dbReference type="EMDB" id="EMD-20257"/>
<dbReference type="EMDB" id="EMD-20258"/>
<dbReference type="EMDB" id="EMD-23785"/>
<dbReference type="EMDB" id="EMD-25994"/>
<dbReference type="EMDB" id="EMD-26035"/>
<dbReference type="EMDB" id="EMD-26036"/>
<dbReference type="EMDB" id="EMD-26133"/>
<dbReference type="EMDB" id="EMD-26444"/>
<dbReference type="EMDB" id="EMD-26445"/>
<dbReference type="EMDB" id="EMD-40344"/>
<dbReference type="EMDB" id="EMD-4130"/>
<dbReference type="EMDB" id="EMD-4131"/>
<dbReference type="EMDB" id="EMD-4132"/>
<dbReference type="EMDB" id="EMD-4133"/>
<dbReference type="EMDB" id="EMD-4134"/>
<dbReference type="EMDB" id="EMD-4135"/>
<dbReference type="EMDB" id="EMD-4136"/>
<dbReference type="EMDB" id="EMD-4137"/>
<dbReference type="EMDB" id="EMD-4300"/>
<dbReference type="EMDB" id="EMD-4315"/>
<dbReference type="EMDB" id="EMD-4316"/>
<dbReference type="EMDB" id="EMD-4317"/>
<dbReference type="EMDB" id="EMD-43189"/>
<dbReference type="EMDB" id="EMD-44461"/>
<dbReference type="EMDB" id="EMD-44463"/>
<dbReference type="EMDB" id="EMD-44464"/>
<dbReference type="EMDB" id="EMD-4729"/>
<dbReference type="EMDB" id="EMD-4735"/>
<dbReference type="EMDB" id="EMD-4737"/>
<dbReference type="EMDB" id="EMD-4745"/>
<dbReference type="EMDB" id="EMD-7834"/>
<dbReference type="EMDB" id="EMD-7836"/>
<dbReference type="EMDB" id="EMD-9237"/>
<dbReference type="EMDB" id="EMD-9239"/>
<dbReference type="EMDB" id="EMD-9240"/>
<dbReference type="EMDB" id="EMD-9242"/>
<dbReference type="SMR" id="P19949"/>
<dbReference type="IntAct" id="P19949">
    <property type="interactions" value="1"/>
</dbReference>
<dbReference type="STRING" id="9986.ENSOCUP00000008691"/>
<dbReference type="PaxDb" id="9986-ENSOCUP00000008691"/>
<dbReference type="Ensembl" id="ENSOCUT00000010088.3">
    <property type="protein sequence ID" value="ENSOCUP00000008691.3"/>
    <property type="gene ID" value="ENSOCUG00000010089.3"/>
</dbReference>
<dbReference type="GeneID" id="100008649"/>
<dbReference type="KEGG" id="ocu:100008649"/>
<dbReference type="KEGG" id="ocu:100341713"/>
<dbReference type="CTD" id="6125"/>
<dbReference type="eggNOG" id="KOG0875">
    <property type="taxonomic scope" value="Eukaryota"/>
</dbReference>
<dbReference type="GeneTree" id="ENSGT00950000183210"/>
<dbReference type="HOGENOM" id="CLU_056222_1_0_1"/>
<dbReference type="InParanoid" id="G1SYJ6"/>
<dbReference type="OrthoDB" id="9577612at2759"/>
<dbReference type="TreeFam" id="TF300044"/>
<dbReference type="Proteomes" id="UP000001811">
    <property type="component" value="Chromosome 13"/>
</dbReference>
<dbReference type="Bgee" id="ENSOCUG00000010089">
    <property type="expression patterns" value="Expressed in autopod skin and 14 other cell types or tissues"/>
</dbReference>
<dbReference type="GO" id="GO:0005737">
    <property type="term" value="C:cytoplasm"/>
    <property type="evidence" value="ECO:0000250"/>
    <property type="project" value="UniProtKB"/>
</dbReference>
<dbReference type="GO" id="GO:0022625">
    <property type="term" value="C:cytosolic large ribosomal subunit"/>
    <property type="evidence" value="ECO:0007669"/>
    <property type="project" value="TreeGrafter"/>
</dbReference>
<dbReference type="GO" id="GO:0005730">
    <property type="term" value="C:nucleolus"/>
    <property type="evidence" value="ECO:0000250"/>
    <property type="project" value="UniProtKB"/>
</dbReference>
<dbReference type="GO" id="GO:0008097">
    <property type="term" value="F:5S rRNA binding"/>
    <property type="evidence" value="ECO:0007669"/>
    <property type="project" value="InterPro"/>
</dbReference>
<dbReference type="GO" id="GO:0003735">
    <property type="term" value="F:structural constituent of ribosome"/>
    <property type="evidence" value="ECO:0007669"/>
    <property type="project" value="InterPro"/>
</dbReference>
<dbReference type="GO" id="GO:0000027">
    <property type="term" value="P:ribosomal large subunit assembly"/>
    <property type="evidence" value="ECO:0007669"/>
    <property type="project" value="TreeGrafter"/>
</dbReference>
<dbReference type="GO" id="GO:0006412">
    <property type="term" value="P:translation"/>
    <property type="evidence" value="ECO:0007669"/>
    <property type="project" value="InterPro"/>
</dbReference>
<dbReference type="CDD" id="cd00432">
    <property type="entry name" value="Ribosomal_L18_L5e"/>
    <property type="match status" value="1"/>
</dbReference>
<dbReference type="FunFam" id="3.30.420.100:FF:000011">
    <property type="entry name" value="60S ribosomal protein L5"/>
    <property type="match status" value="1"/>
</dbReference>
<dbReference type="FunFam" id="3.30.420.100:FF:000013">
    <property type="entry name" value="60S ribosomal protein L5 isoform X2"/>
    <property type="match status" value="1"/>
</dbReference>
<dbReference type="Gene3D" id="3.30.420.100">
    <property type="match status" value="1"/>
</dbReference>
<dbReference type="HAMAP" id="MF_01337_A">
    <property type="entry name" value="Ribosomal_uL18_A"/>
    <property type="match status" value="1"/>
</dbReference>
<dbReference type="InterPro" id="IPR005485">
    <property type="entry name" value="Rbsml_uL18_euk"/>
</dbReference>
<dbReference type="InterPro" id="IPR025607">
    <property type="entry name" value="Ribosomal_uL18_C_euk"/>
</dbReference>
<dbReference type="PANTHER" id="PTHR23410:SF12">
    <property type="entry name" value="LARGE RIBOSOMAL SUBUNIT PROTEIN UL18"/>
    <property type="match status" value="1"/>
</dbReference>
<dbReference type="PANTHER" id="PTHR23410">
    <property type="entry name" value="RIBOSOMAL PROTEIN L5-RELATED"/>
    <property type="match status" value="1"/>
</dbReference>
<dbReference type="Pfam" id="PF14204">
    <property type="entry name" value="Ribosomal_L18_c"/>
    <property type="match status" value="1"/>
</dbReference>
<dbReference type="Pfam" id="PF17144">
    <property type="entry name" value="Ribosomal_L5e"/>
    <property type="match status" value="1"/>
</dbReference>
<dbReference type="PRINTS" id="PR00058">
    <property type="entry name" value="RIBOSOMALL5"/>
</dbReference>
<dbReference type="SUPFAM" id="SSF53137">
    <property type="entry name" value="Translational machinery components"/>
    <property type="match status" value="1"/>
</dbReference>
<keyword id="KW-0002">3D-structure</keyword>
<keyword id="KW-0007">Acetylation</keyword>
<keyword id="KW-0963">Cytoplasm</keyword>
<keyword id="KW-0903">Direct protein sequencing</keyword>
<keyword id="KW-1017">Isopeptide bond</keyword>
<keyword id="KW-0539">Nucleus</keyword>
<keyword id="KW-0597">Phosphoprotein</keyword>
<keyword id="KW-1185">Reference proteome</keyword>
<keyword id="KW-0687">Ribonucleoprotein</keyword>
<keyword id="KW-0689">Ribosomal protein</keyword>
<keyword id="KW-0694">RNA-binding</keyword>
<keyword id="KW-0699">rRNA-binding</keyword>
<keyword id="KW-0832">Ubl conjugation</keyword>
<gene>
    <name type="primary">RPL5</name>
</gene>
<feature type="initiator methionine" description="Removed" evidence="1">
    <location>
        <position position="1"/>
    </location>
</feature>
<feature type="chain" id="PRO_0000460091" description="Large ribosomal subunit protein uL18">
    <location>
        <begin position="2"/>
        <end position="297"/>
    </location>
</feature>
<feature type="region of interest" description="Disordered" evidence="3">
    <location>
        <begin position="253"/>
        <end position="297"/>
    </location>
</feature>
<feature type="compositionally biased region" description="Basic residues" evidence="3">
    <location>
        <begin position="258"/>
        <end position="268"/>
    </location>
</feature>
<feature type="modified residue" description="N-acetylglycine" evidence="1">
    <location>
        <position position="2"/>
    </location>
</feature>
<feature type="modified residue" description="N6-acetyllysine" evidence="1">
    <location>
        <position position="5"/>
    </location>
</feature>
<feature type="modified residue" description="N6-acetyllysine" evidence="1">
    <location>
        <position position="48"/>
    </location>
</feature>
<feature type="modified residue" description="Phosphoserine" evidence="1">
    <location>
        <position position="185"/>
    </location>
</feature>
<feature type="modified residue" description="N6-acetyllysine; alternate" evidence="2">
    <location>
        <position position="220"/>
    </location>
</feature>
<feature type="modified residue" description="Phosphothreonine" evidence="1">
    <location>
        <position position="232"/>
    </location>
</feature>
<feature type="modified residue" description="Phosphoserine" evidence="1">
    <location>
        <position position="272"/>
    </location>
</feature>
<feature type="cross-link" description="Glycyl lysine isopeptide (Lys-Gly) (interchain with G-Cter in SUMO1); alternate" evidence="1">
    <location>
        <position position="220"/>
    </location>
</feature>
<feature type="cross-link" description="Glycyl lysine isopeptide (Lys-Gly) (interchain with G-Cter in SUMO2); alternate" evidence="1">
    <location>
        <position position="220"/>
    </location>
</feature>
<accession>P19949</accession>
<accession>G1SYJ6</accession>
<accession>O19046</accession>
<sequence>MGFVKVVKNKAYFKRYQVKFRRRREGKTDYYARKRLVIQDKNKYNTPKYRMIVRVTNRDIICQIAYARIEGDMIVCAAYAHELPKYGVKVGLTNYAAAYCTGLLLARRLLNRFGMDKIYEGQVEVTGDEYNVESIDGQPGAFTCYLDAGLARTTTGNKVFGALKGAVDGGLSIPHSTKRFPGYDSESKEFNAEVHRKHIMGQNVADYMRYLMEEDEDAYKKQFSQYIKNNVTPDMMEEMYKKAHAAIRENPVYEKKPKREVKKKRWNRPKMSLAQKKDRVAQKKASFLRAQERAAES</sequence>
<reference key="1">
    <citation type="journal article" date="2011" name="Nature">
        <title>A high-resolution map of human evolutionary constraint using 29 mammals.</title>
        <authorList>
            <person name="Lindblad-Toh K."/>
            <person name="Garber M."/>
            <person name="Zuk O."/>
            <person name="Lin M.F."/>
            <person name="Parker B.J."/>
            <person name="Washietl S."/>
            <person name="Kheradpour P."/>
            <person name="Ernst J."/>
            <person name="Jordan G."/>
            <person name="Mauceli E."/>
            <person name="Ward L.D."/>
            <person name="Lowe C.B."/>
            <person name="Holloway A.K."/>
            <person name="Clamp M."/>
            <person name="Gnerre S."/>
            <person name="Alfoldi J."/>
            <person name="Beal K."/>
            <person name="Chang J."/>
            <person name="Clawson H."/>
            <person name="Cuff J."/>
            <person name="Di Palma F."/>
            <person name="Fitzgerald S."/>
            <person name="Flicek P."/>
            <person name="Guttman M."/>
            <person name="Hubisz M.J."/>
            <person name="Jaffe D.B."/>
            <person name="Jungreis I."/>
            <person name="Kent W.J."/>
            <person name="Kostka D."/>
            <person name="Lara M."/>
            <person name="Martins A.L."/>
            <person name="Massingham T."/>
            <person name="Moltke I."/>
            <person name="Raney B.J."/>
            <person name="Rasmussen M.D."/>
            <person name="Robinson J."/>
            <person name="Stark A."/>
            <person name="Vilella A.J."/>
            <person name="Wen J."/>
            <person name="Xie X."/>
            <person name="Zody M.C."/>
            <person name="Baldwin J."/>
            <person name="Bloom T."/>
            <person name="Chin C.W."/>
            <person name="Heiman D."/>
            <person name="Nicol R."/>
            <person name="Nusbaum C."/>
            <person name="Young S."/>
            <person name="Wilkinson J."/>
            <person name="Worley K.C."/>
            <person name="Kovar C.L."/>
            <person name="Muzny D.M."/>
            <person name="Gibbs R.A."/>
            <person name="Cree A."/>
            <person name="Dihn H.H."/>
            <person name="Fowler G."/>
            <person name="Jhangiani S."/>
            <person name="Joshi V."/>
            <person name="Lee S."/>
            <person name="Lewis L.R."/>
            <person name="Nazareth L.V."/>
            <person name="Okwuonu G."/>
            <person name="Santibanez J."/>
            <person name="Warren W.C."/>
            <person name="Mardis E.R."/>
            <person name="Weinstock G.M."/>
            <person name="Wilson R.K."/>
            <person name="Delehaunty K."/>
            <person name="Dooling D."/>
            <person name="Fronik C."/>
            <person name="Fulton L."/>
            <person name="Fulton B."/>
            <person name="Graves T."/>
            <person name="Minx P."/>
            <person name="Sodergren E."/>
            <person name="Birney E."/>
            <person name="Margulies E.H."/>
            <person name="Herrero J."/>
            <person name="Green E.D."/>
            <person name="Haussler D."/>
            <person name="Siepel A."/>
            <person name="Goldman N."/>
            <person name="Pollard K.S."/>
            <person name="Pedersen J.S."/>
            <person name="Lander E.S."/>
            <person name="Kellis M."/>
        </authorList>
    </citation>
    <scope>NUCLEOTIDE SEQUENCE [LARGE SCALE GENOMIC DNA]</scope>
    <source>
        <strain>Thorbecke</strain>
    </source>
</reference>
<reference key="2">
    <citation type="journal article" date="1987" name="Eur. J. Biochem.">
        <title>5S-rRNA-containing ribonucleoproteins from rabbit muscle and liver. Complex and partial primary structures.</title>
        <authorList>
            <person name="Nendza R."/>
            <person name="Digweed M."/>
            <person name="Meyer H.E."/>
            <person name="Erdmann V.A."/>
            <person name="Mayr G.W."/>
        </authorList>
    </citation>
    <scope>PARTIAL PROTEIN SEQUENCE</scope>
</reference>
<reference evidence="17 18" key="3">
    <citation type="journal article" date="2015" name="Nature">
        <title>Structural basis for stop codon recognition in eukaryotes.</title>
        <authorList>
            <person name="Brown A."/>
            <person name="Shao S."/>
            <person name="Murray J."/>
            <person name="Hegde R.S."/>
            <person name="Ramakrishnan V."/>
        </authorList>
    </citation>
    <scope>STRUCTURE BY ELECTRON MICROSCOPY (3.45 ANGSTROMS) OF 3-294 OF RIBOSOME</scope>
    <scope>FUNCTION</scope>
    <scope>SUBCELLULAR LOCATION</scope>
    <scope>SUBUNIT</scope>
</reference>
<reference evidence="19 20" key="4">
    <citation type="journal article" date="2016" name="Cell">
        <title>Decoding mammalian ribosome-mRNA states by translational GTPase complexes.</title>
        <authorList>
            <person name="Shao S."/>
            <person name="Murray J."/>
            <person name="Brown A."/>
            <person name="Taunton J."/>
            <person name="Ramakrishnan V."/>
            <person name="Hegde R.S."/>
        </authorList>
    </citation>
    <scope>STRUCTURE BY ELECTRON MICROSCOPY (3.31 ANGSTROMS) OF 2-297 OF RIBOSOME</scope>
    <scope>FUNCTION</scope>
    <scope>SUBCELLULAR LOCATION</scope>
    <scope>SUBUNIT</scope>
</reference>
<reference evidence="21 22" key="5">
    <citation type="journal article" date="2018" name="Elife">
        <title>Dual tRNA mimicry in the Cricket paralysis virus IRES uncovers an unexpected similarity with the Hepatitis C Virus IRES.</title>
        <authorList>
            <person name="Pisareva V.P."/>
            <person name="Pisarev A.V."/>
            <person name="Fernandez I.S."/>
        </authorList>
    </citation>
    <scope>STRUCTURE BY ELECTRON MICROSCOPY (3.20 ANGSTROMS) OF 2-297 OF RIBOSOME</scope>
    <scope>SUBCELLULAR LOCATION</scope>
    <scope>SUBUNIT</scope>
</reference>
<reference evidence="25 26" key="6">
    <citation type="journal article" date="2018" name="Elife">
        <title>Structures of translationally inactive mammalian ribosomes.</title>
        <authorList>
            <person name="Brown A."/>
            <person name="Baird M.R."/>
            <person name="Yip M.C."/>
            <person name="Murray J."/>
            <person name="Shao S."/>
        </authorList>
    </citation>
    <scope>STRUCTURE BY ELECTRON MICROSCOPY (3.30 ANGSTROMS) OF 3-295 OF RIBOSOME</scope>
    <scope>SUBCELLULAR LOCATION</scope>
    <scope>SUBUNIT</scope>
</reference>
<reference evidence="23 24" key="7">
    <citation type="journal article" date="2018" name="Mol. Cell">
        <title>ZNF598 is a quality control sensor of collided ribosomes.</title>
        <authorList>
            <person name="Juszkiewicz S."/>
            <person name="Chandrasekaran V."/>
            <person name="Lin Z."/>
            <person name="Kraatz S."/>
            <person name="Ramakrishnan V."/>
            <person name="Hegde R.S."/>
        </authorList>
    </citation>
    <scope>STRUCTURE BY ELECTRON MICROSCOPY (3.80 ANGSTROMS) OF RIBOSOME</scope>
    <scope>SUBCELLULAR LOCATION</scope>
    <scope>SUBUNIT</scope>
</reference>
<reference evidence="29 30" key="8">
    <citation type="journal article" date="2019" name="Elife">
        <title>Structural and mutational analysis of the ribosome-arresting human XBP1u.</title>
        <authorList>
            <person name="Shanmuganathan V."/>
            <person name="Schiller N."/>
            <person name="Magoulopoulou A."/>
            <person name="Cheng J."/>
            <person name="Braunger K."/>
            <person name="Cymer F."/>
            <person name="Berninghausen O."/>
            <person name="Beatrix B."/>
            <person name="Kohno K."/>
            <person name="von Heijne G."/>
            <person name="Beckmann R."/>
        </authorList>
    </citation>
    <scope>STRUCTURE BY ELECTRON MICROSCOPY (3.00 ANGSTROMS) OF 3-295 OF RIBOSOME</scope>
    <scope>SUBCELLULAR LOCATION</scope>
    <scope>SUBUNIT</scope>
</reference>
<reference evidence="27 28" key="9">
    <citation type="journal article" date="2019" name="EMBO J.">
        <title>The Israeli acute paralysis virus IRES captures host ribosomes by mimicking a ribosomal state with hybrid tRNAs.</title>
        <authorList>
            <person name="Acosta-Reyes F."/>
            <person name="Neupane R."/>
            <person name="Frank J."/>
            <person name="Fernandez I.S."/>
        </authorList>
    </citation>
    <scope>STRUCTURE BY ELECTRON MICROSCOPY (3.10 ANGSTROMS) OF 2-297 OF RIBOSOME</scope>
    <scope>SUBCELLULAR LOCATION</scope>
    <scope>SUBUNIT</scope>
</reference>
<reference evidence="31" key="10">
    <citation type="journal article" date="2019" name="Nat. Struct. Mol. Biol.">
        <title>Mechanism of ribosome stalling during translation of a poly(A) tail.</title>
        <authorList>
            <person name="Chandrasekaran V."/>
            <person name="Juszkiewicz S."/>
            <person name="Choi J."/>
            <person name="Puglisi J.D."/>
            <person name="Brown A."/>
            <person name="Shao S."/>
            <person name="Ramakrishnan V."/>
            <person name="Hegde R.S."/>
        </authorList>
    </citation>
    <scope>STRUCTURE BY ELECTRON MICROSCOPY (2.80 ANGSTROMS) OF 239-432 OF RIBOSOME</scope>
    <scope>SUBCELLULAR LOCATION</scope>
    <scope>SUBUNIT</scope>
</reference>
<reference evidence="32 33" key="11">
    <citation type="journal article" date="2020" name="Cell Rep.">
        <title>The Halastavi arva virus intergenic region IRES promotes translation by the simplest possible initiation mechanism.</title>
        <authorList>
            <person name="Abaeva I.S."/>
            <person name="Vicens Q."/>
            <person name="Bochler A."/>
            <person name="Soufari H."/>
            <person name="Simonetti A."/>
            <person name="Pestova T.V."/>
            <person name="Hashem Y."/>
            <person name="Hellen C.U.T."/>
        </authorList>
    </citation>
    <scope>STRUCTURE BY ELECTRON MICROSCOPY (3.49 ANGSTROMS) OF 3-294 OF RIBOSOME</scope>
    <scope>SUBCELLULAR LOCATION</scope>
    <scope>SUBUNIT</scope>
</reference>
<reference evidence="35 36" key="12">
    <citation type="journal article" date="2022" name="Mol. Cell">
        <title>Direct epitranscriptomic regulation of mammalian translation initiation through N4-acetylcytidine.</title>
        <authorList>
            <person name="Arango D."/>
            <person name="Sturgill D."/>
            <person name="Yang R."/>
            <person name="Kanai T."/>
            <person name="Bauer P."/>
            <person name="Roy J."/>
            <person name="Wang Z."/>
            <person name="Hosogane M."/>
            <person name="Schiffers S."/>
            <person name="Oberdoerffer S."/>
        </authorList>
    </citation>
    <scope>STRUCTURE BY ELECTRON MICROSCOPY (2.80 ANGSTROMS) OF 2-92 OF RIBOSOME</scope>
    <scope>SUBCELLULAR LOCATION</scope>
    <scope>SUBUNIT</scope>
</reference>
<reference evidence="37 38" key="13">
    <citation type="journal article" date="2022" name="Science">
        <title>Structure of the mammalian ribosome as it decodes the selenocysteine UGA codon.</title>
        <authorList>
            <person name="Hilal T."/>
            <person name="Killam B.Y."/>
            <person name="Grozdanovic M."/>
            <person name="Dobosz-Bartoszek M."/>
            <person name="Loerke J."/>
            <person name="Buerger J."/>
            <person name="Mielke T."/>
            <person name="Copeland P.R."/>
            <person name="Simonovic M."/>
            <person name="Spahn C.M.T."/>
        </authorList>
    </citation>
    <scope>STRUCTURE BY ELECTRON MICROSCOPY (2.80 ANGSTROMS) OF RIBOSOME</scope>
    <scope>SUBCELLULAR LOCATION</scope>
    <scope>SUBUNIT</scope>
</reference>
<reference evidence="34" key="14">
    <citation type="journal article" date="2023" name="Nature">
        <title>A molecular network of conserved factors keeps ribosomes dormant in the egg.</title>
        <authorList>
            <person name="Leesch F."/>
            <person name="Lorenzo-Orts L."/>
            <person name="Pribitzer C."/>
            <person name="Grishkovskaya I."/>
            <person name="Roehsner J."/>
            <person name="Chugunova A."/>
            <person name="Matzinger M."/>
            <person name="Roitinger E."/>
            <person name="Belacic K."/>
            <person name="Kandolf S."/>
            <person name="Lin T.Y."/>
            <person name="Mechtler K."/>
            <person name="Meinhart A."/>
            <person name="Haselbach D."/>
            <person name="Pauli A."/>
        </authorList>
    </citation>
    <scope>STRUCTURE BY ELECTRON MICROSCOPY (2.30 ANGSTROMS) OF RIBOSOME</scope>
    <scope>SUBCELLULAR LOCATION</scope>
    <scope>SUBUNIT</scope>
</reference>
<proteinExistence type="evidence at protein level"/>
<protein>
    <recommendedName>
        <fullName>Large ribosomal subunit protein uL18</fullName>
    </recommendedName>
    <alternativeName>
        <fullName>60S ribosomal protein L5</fullName>
    </alternativeName>
</protein>
<comment type="function">
    <text evidence="1 4 5">Component of the ribosome, a large ribonucleoprotein complex responsible for the synthesis of proteins in the cell (PubMed:26245381, PubMed:27863242). The small ribosomal subunit (SSU) binds messenger RNAs (mRNAs) and translates the encoded message by selecting cognate aminoacyl-transfer RNA (tRNA) molecules (PubMed:26245381, PubMed:27863242). The large subunit (LSU) contains the ribosomal catalytic site termed the peptidyl transferase center (PTC), which catalyzes the formation of peptide bonds, thereby polymerizing the amino acids delivered by tRNAs into a polypeptide chain (PubMed:26245381, PubMed:27863242). The nascent polypeptides leave the ribosome through a tunnel in the LSU and interact with protein factors that function in enzymatic processing, targeting, and the membrane insertion of nascent chains at the exit of the ribosomal tunnel (By similarity). As part of the 5S RNP/5S ribonucleoprotein particle it is an essential component of the LSU, required for its formation and the maturation of rRNAs (By similarity). It also couples ribosome biogenesis to p53/TP53 activation. As part of the 5S RNP it accumulates in the nucleoplasm and inhibits MDM2, when ribosome biogenesis is perturbed, mediating the stabilization and the activation of TP53 (By similarity).</text>
</comment>
<comment type="subunit">
    <text evidence="1 4 5 6 7 8 9 10 11 12 13 14 15">Component of the large ribosomal subunit (LSU) (PubMed:26245381, PubMed:27863242, PubMed:29856316, PubMed:30293783, PubMed:30355441, PubMed:31246176, PubMed:31609474, PubMed:31768042, PubMed:33296660, PubMed:35679869, PubMed:35709277, PubMed:36653451). Part of the 5S RNP complex, which is a LSU subcomplex composed of the 5S RNA, RPL5 and RPL11 (PubMed:26245381, PubMed:27863242, PubMed:29856316, PubMed:30293783, PubMed:30355441, PubMed:31246176, PubMed:31609474, PubMed:31768042, PubMed:33296660, PubMed:35679869, PubMed:35709277, PubMed:36653451). Component of a hexameric 5S RNP precursor complex, composed of 5S RNA, RRS1, RPF2/BXDC1, RPL5, RPL11 and HEATR3; this complex acts as a precursor for ribosome assembly (By similarity). Interacts with isoform 1 of NVL in an ATP-dependent manner (By similarity). Interacts with RRP1B (By similarity). Interacts with IPO5, IPO7 and KPNB1; these interactions may be involved in RPL5 nuclear import for the assembly of ribosomal subunits (By similarity).</text>
</comment>
<comment type="subcellular location">
    <subcellularLocation>
        <location evidence="4 5 6 7 8 9 10 11 12 13 14 15">Cytoplasm</location>
    </subcellularLocation>
    <subcellularLocation>
        <location evidence="1">Nucleus</location>
        <location evidence="1">Nucleolus</location>
    </subcellularLocation>
    <text evidence="1">Although RP5 is functional within the cytoplasm, the assembly of ribosomal subunits occurs in the nucleus. RPL5 nuclear import is mediated by IPO5/RanBP5, IPO7/RanBP7, KPNB1/importin-beta or TPNO1/Trn.</text>
</comment>
<comment type="similarity">
    <text evidence="16">Belongs to the universal ribosomal protein uL18 family.</text>
</comment>
<name>RL5_RABIT</name>
<organism>
    <name type="scientific">Oryctolagus cuniculus</name>
    <name type="common">Rabbit</name>
    <dbReference type="NCBI Taxonomy" id="9986"/>
    <lineage>
        <taxon>Eukaryota</taxon>
        <taxon>Metazoa</taxon>
        <taxon>Chordata</taxon>
        <taxon>Craniata</taxon>
        <taxon>Vertebrata</taxon>
        <taxon>Euteleostomi</taxon>
        <taxon>Mammalia</taxon>
        <taxon>Eutheria</taxon>
        <taxon>Euarchontoglires</taxon>
        <taxon>Glires</taxon>
        <taxon>Lagomorpha</taxon>
        <taxon>Leporidae</taxon>
        <taxon>Oryctolagus</taxon>
    </lineage>
</organism>